<feature type="chain" id="PRO_0000202132" description="Cysteine desulfuration protein SufE">
    <location>
        <begin position="1"/>
        <end position="138"/>
    </location>
</feature>
<feature type="active site" description="Cysteine persulfide intermediate" evidence="1">
    <location>
        <position position="51"/>
    </location>
</feature>
<accession>Q7C1E6</accession>
<accession>Q83KW5</accession>
<evidence type="ECO:0000255" key="1">
    <source>
        <dbReference type="HAMAP-Rule" id="MF_01832"/>
    </source>
</evidence>
<keyword id="KW-0963">Cytoplasm</keyword>
<keyword id="KW-1185">Reference proteome</keyword>
<comment type="function">
    <text evidence="1">Participates in cysteine desulfuration mediated by SufS. Cysteine desulfuration mobilizes sulfur from L-cysteine to yield L-alanine and constitutes an essential step in sulfur metabolism for biosynthesis of a variety of sulfur-containing biomolecules. Functions as a sulfur acceptor for SufS, by mediating the direct transfer of the sulfur atom from the S-sulfanylcysteine of SufS, an intermediate product of cysteine desulfuration process.</text>
</comment>
<comment type="pathway">
    <text evidence="1">Cofactor biosynthesis; iron-sulfur cluster biosynthesis.</text>
</comment>
<comment type="subunit">
    <text evidence="1">Homodimer. Interacts with SufS.</text>
</comment>
<comment type="subcellular location">
    <subcellularLocation>
        <location evidence="1">Cytoplasm</location>
    </subcellularLocation>
</comment>
<comment type="similarity">
    <text evidence="1">Belongs to the SufE family.</text>
</comment>
<reference key="1">
    <citation type="journal article" date="2002" name="Nucleic Acids Res.">
        <title>Genome sequence of Shigella flexneri 2a: insights into pathogenicity through comparison with genomes of Escherichia coli K12 and O157.</title>
        <authorList>
            <person name="Jin Q."/>
            <person name="Yuan Z."/>
            <person name="Xu J."/>
            <person name="Wang Y."/>
            <person name="Shen Y."/>
            <person name="Lu W."/>
            <person name="Wang J."/>
            <person name="Liu H."/>
            <person name="Yang J."/>
            <person name="Yang F."/>
            <person name="Zhang X."/>
            <person name="Zhang J."/>
            <person name="Yang G."/>
            <person name="Wu H."/>
            <person name="Qu D."/>
            <person name="Dong J."/>
            <person name="Sun L."/>
            <person name="Xue Y."/>
            <person name="Zhao A."/>
            <person name="Gao Y."/>
            <person name="Zhu J."/>
            <person name="Kan B."/>
            <person name="Ding K."/>
            <person name="Chen S."/>
            <person name="Cheng H."/>
            <person name="Yao Z."/>
            <person name="He B."/>
            <person name="Chen R."/>
            <person name="Ma D."/>
            <person name="Qiang B."/>
            <person name="Wen Y."/>
            <person name="Hou Y."/>
            <person name="Yu J."/>
        </authorList>
    </citation>
    <scope>NUCLEOTIDE SEQUENCE [LARGE SCALE GENOMIC DNA]</scope>
    <source>
        <strain>301 / Serotype 2a</strain>
    </source>
</reference>
<reference key="2">
    <citation type="journal article" date="2003" name="Infect. Immun.">
        <title>Complete genome sequence and comparative genomics of Shigella flexneri serotype 2a strain 2457T.</title>
        <authorList>
            <person name="Wei J."/>
            <person name="Goldberg M.B."/>
            <person name="Burland V."/>
            <person name="Venkatesan M.M."/>
            <person name="Deng W."/>
            <person name="Fournier G."/>
            <person name="Mayhew G.F."/>
            <person name="Plunkett G. III"/>
            <person name="Rose D.J."/>
            <person name="Darling A."/>
            <person name="Mau B."/>
            <person name="Perna N.T."/>
            <person name="Payne S.M."/>
            <person name="Runyen-Janecky L.J."/>
            <person name="Zhou S."/>
            <person name="Schwartz D.C."/>
            <person name="Blattner F.R."/>
        </authorList>
    </citation>
    <scope>NUCLEOTIDE SEQUENCE [LARGE SCALE GENOMIC DNA]</scope>
    <source>
        <strain>ATCC 700930 / 2457T / Serotype 2a</strain>
    </source>
</reference>
<name>SUFE_SHIFL</name>
<sequence length="138" mass="15657">MALLPDKEKLLRNFLRCANWEEKYLYIIELGQRLPELRAEDGSPQNSIQGCQSQVWIVMRQNAQGIIELQGDSDAAIVKGLIAVVFILYDQMTPQDIVNFDVRPWFEKMALTQHLTPSRSQGLEAMIRAIRAKAAALS</sequence>
<dbReference type="EMBL" id="AE005674">
    <property type="protein sequence ID" value="AAN43285.1"/>
    <property type="molecule type" value="Genomic_DNA"/>
</dbReference>
<dbReference type="EMBL" id="AE014073">
    <property type="protein sequence ID" value="AAP17173.1"/>
    <property type="molecule type" value="Genomic_DNA"/>
</dbReference>
<dbReference type="RefSeq" id="WP_001196515.1">
    <property type="nucleotide sequence ID" value="NZ_WPGW01000073.1"/>
</dbReference>
<dbReference type="SMR" id="Q7C1E6"/>
<dbReference type="STRING" id="198214.SF1708"/>
<dbReference type="PaxDb" id="198214-SF1708"/>
<dbReference type="KEGG" id="sfl:SF1708"/>
<dbReference type="KEGG" id="sfx:S1841"/>
<dbReference type="PATRIC" id="fig|198214.7.peg.2021"/>
<dbReference type="HOGENOM" id="CLU_124502_1_1_6"/>
<dbReference type="UniPathway" id="UPA00266"/>
<dbReference type="Proteomes" id="UP000001006">
    <property type="component" value="Chromosome"/>
</dbReference>
<dbReference type="Proteomes" id="UP000002673">
    <property type="component" value="Chromosome"/>
</dbReference>
<dbReference type="GO" id="GO:0005737">
    <property type="term" value="C:cytoplasm"/>
    <property type="evidence" value="ECO:0007669"/>
    <property type="project" value="UniProtKB-SubCell"/>
</dbReference>
<dbReference type="GO" id="GO:0016226">
    <property type="term" value="P:iron-sulfur cluster assembly"/>
    <property type="evidence" value="ECO:0007669"/>
    <property type="project" value="InterPro"/>
</dbReference>
<dbReference type="GO" id="GO:0006790">
    <property type="term" value="P:sulfur compound metabolic process"/>
    <property type="evidence" value="ECO:0007669"/>
    <property type="project" value="InterPro"/>
</dbReference>
<dbReference type="FunFam" id="3.90.1010.10:FF:000004">
    <property type="entry name" value="Cysteine desulfuration protein SufE"/>
    <property type="match status" value="1"/>
</dbReference>
<dbReference type="Gene3D" id="3.90.1010.10">
    <property type="match status" value="1"/>
</dbReference>
<dbReference type="HAMAP" id="MF_01832">
    <property type="entry name" value="SufE"/>
    <property type="match status" value="1"/>
</dbReference>
<dbReference type="InterPro" id="IPR023939">
    <property type="entry name" value="Cysteine_desulfuration_SufE"/>
</dbReference>
<dbReference type="InterPro" id="IPR003808">
    <property type="entry name" value="Fe-S_metab-assoc_dom"/>
</dbReference>
<dbReference type="NCBIfam" id="NF006792">
    <property type="entry name" value="PRK09296.1"/>
    <property type="match status" value="1"/>
</dbReference>
<dbReference type="PANTHER" id="PTHR43597:SF3">
    <property type="entry name" value="CYSTEINE DESULFURATION PROTEIN SUFE"/>
    <property type="match status" value="1"/>
</dbReference>
<dbReference type="PANTHER" id="PTHR43597">
    <property type="entry name" value="SULFUR ACCEPTOR PROTEIN CSDE"/>
    <property type="match status" value="1"/>
</dbReference>
<dbReference type="Pfam" id="PF02657">
    <property type="entry name" value="SufE"/>
    <property type="match status" value="1"/>
</dbReference>
<dbReference type="SUPFAM" id="SSF82649">
    <property type="entry name" value="SufE/NifU"/>
    <property type="match status" value="1"/>
</dbReference>
<proteinExistence type="inferred from homology"/>
<protein>
    <recommendedName>
        <fullName evidence="1">Cysteine desulfuration protein SufE</fullName>
    </recommendedName>
</protein>
<organism>
    <name type="scientific">Shigella flexneri</name>
    <dbReference type="NCBI Taxonomy" id="623"/>
    <lineage>
        <taxon>Bacteria</taxon>
        <taxon>Pseudomonadati</taxon>
        <taxon>Pseudomonadota</taxon>
        <taxon>Gammaproteobacteria</taxon>
        <taxon>Enterobacterales</taxon>
        <taxon>Enterobacteriaceae</taxon>
        <taxon>Shigella</taxon>
    </lineage>
</organism>
<gene>
    <name evidence="1" type="primary">sufE</name>
    <name type="ordered locus">SF1707.1</name>
    <name type="ordered locus">S1841</name>
</gene>